<comment type="subcellular location">
    <subcellularLocation>
        <location evidence="1">Secreted</location>
    </subcellularLocation>
</comment>
<comment type="similarity">
    <text evidence="3">Belongs to the DEFL family.</text>
</comment>
<reference key="1">
    <citation type="journal article" date="1998" name="DNA Res.">
        <title>Structural analysis of Arabidopsis thaliana chromosome 5. V. Sequence features of the regions of 1,381,565 bp covered by twenty one physically assigned P1 and TAC clones.</title>
        <authorList>
            <person name="Kaneko T."/>
            <person name="Kotani H."/>
            <person name="Nakamura Y."/>
            <person name="Sato S."/>
            <person name="Asamizu E."/>
            <person name="Miyajima N."/>
            <person name="Tabata S."/>
        </authorList>
    </citation>
    <scope>NUCLEOTIDE SEQUENCE [LARGE SCALE GENOMIC DNA]</scope>
    <source>
        <strain>cv. Columbia</strain>
    </source>
</reference>
<reference key="2">
    <citation type="journal article" date="2017" name="Plant J.">
        <title>Araport11: a complete reannotation of the Arabidopsis thaliana reference genome.</title>
        <authorList>
            <person name="Cheng C.Y."/>
            <person name="Krishnakumar V."/>
            <person name="Chan A.P."/>
            <person name="Thibaud-Nissen F."/>
            <person name="Schobel S."/>
            <person name="Town C.D."/>
        </authorList>
    </citation>
    <scope>GENOME REANNOTATION</scope>
    <source>
        <strain>cv. Columbia</strain>
    </source>
</reference>
<reference key="3">
    <citation type="journal article" date="2005" name="Plant Physiol.">
        <title>Genome organization of more than 300 defensin-like genes in Arabidopsis.</title>
        <authorList>
            <person name="Silverstein K.A.T."/>
            <person name="Graham M.A."/>
            <person name="Paape T.D."/>
            <person name="VandenBosch K.A."/>
        </authorList>
    </citation>
    <scope>GENE FAMILY</scope>
</reference>
<sequence>MSSKIKFVALLIVVISLLLNNAQSTREILSAEICGWNDPAVHCKTKEDCFEKCGGRPAKKVFCVRPGDHSYDRLCCCRA</sequence>
<gene>
    <name type="ordered locus">At5g60553</name>
    <name type="ORF">MUF9</name>
</gene>
<evidence type="ECO:0000250" key="1"/>
<evidence type="ECO:0000255" key="2"/>
<evidence type="ECO:0000305" key="3"/>
<organism>
    <name type="scientific">Arabidopsis thaliana</name>
    <name type="common">Mouse-ear cress</name>
    <dbReference type="NCBI Taxonomy" id="3702"/>
    <lineage>
        <taxon>Eukaryota</taxon>
        <taxon>Viridiplantae</taxon>
        <taxon>Streptophyta</taxon>
        <taxon>Embryophyta</taxon>
        <taxon>Tracheophyta</taxon>
        <taxon>Spermatophyta</taxon>
        <taxon>Magnoliopsida</taxon>
        <taxon>eudicotyledons</taxon>
        <taxon>Gunneridae</taxon>
        <taxon>Pentapetalae</taxon>
        <taxon>rosids</taxon>
        <taxon>malvids</taxon>
        <taxon>Brassicales</taxon>
        <taxon>Brassicaceae</taxon>
        <taxon>Camelineae</taxon>
        <taxon>Arabidopsis</taxon>
    </lineage>
</organism>
<name>DF272_ARATH</name>
<protein>
    <recommendedName>
        <fullName>Defensin-like protein 272</fullName>
    </recommendedName>
</protein>
<proteinExistence type="evidence at transcript level"/>
<feature type="signal peptide" evidence="2">
    <location>
        <begin position="1"/>
        <end position="24"/>
    </location>
</feature>
<feature type="chain" id="PRO_0000379734" description="Defensin-like protein 272">
    <location>
        <begin position="25"/>
        <end position="79"/>
    </location>
</feature>
<feature type="disulfide bond" evidence="1">
    <location>
        <begin position="34"/>
        <end position="77"/>
    </location>
</feature>
<feature type="disulfide bond" evidence="1">
    <location>
        <begin position="43"/>
        <end position="63"/>
    </location>
</feature>
<feature type="disulfide bond" evidence="1">
    <location>
        <begin position="49"/>
        <end position="75"/>
    </location>
</feature>
<feature type="disulfide bond" evidence="1">
    <location>
        <begin position="53"/>
        <end position="76"/>
    </location>
</feature>
<accession>Q2V2W8</accession>
<keyword id="KW-0929">Antimicrobial</keyword>
<keyword id="KW-1015">Disulfide bond</keyword>
<keyword id="KW-0295">Fungicide</keyword>
<keyword id="KW-0611">Plant defense</keyword>
<keyword id="KW-1185">Reference proteome</keyword>
<keyword id="KW-0964">Secreted</keyword>
<keyword id="KW-0732">Signal</keyword>
<dbReference type="EMBL" id="AB011483">
    <property type="status" value="NOT_ANNOTATED_CDS"/>
    <property type="molecule type" value="Genomic_DNA"/>
</dbReference>
<dbReference type="EMBL" id="CP002688">
    <property type="protein sequence ID" value="AED97344.1"/>
    <property type="molecule type" value="Genomic_DNA"/>
</dbReference>
<dbReference type="RefSeq" id="NP_001032111.1">
    <property type="nucleotide sequence ID" value="NM_001037034.2"/>
</dbReference>
<dbReference type="STRING" id="3702.Q2V2W8"/>
<dbReference type="PaxDb" id="3702-AT5G60553.1"/>
<dbReference type="ProteomicsDB" id="224008"/>
<dbReference type="EnsemblPlants" id="AT5G60553.1">
    <property type="protein sequence ID" value="AT5G60553.1"/>
    <property type="gene ID" value="AT5G60553"/>
</dbReference>
<dbReference type="GeneID" id="3771541"/>
<dbReference type="Gramene" id="AT5G60553.1">
    <property type="protein sequence ID" value="AT5G60553.1"/>
    <property type="gene ID" value="AT5G60553"/>
</dbReference>
<dbReference type="KEGG" id="ath:AT5G60553"/>
<dbReference type="Araport" id="AT5G60553"/>
<dbReference type="TAIR" id="AT5G60553"/>
<dbReference type="HOGENOM" id="CLU_195514_0_0_1"/>
<dbReference type="InParanoid" id="Q2V2W8"/>
<dbReference type="OMA" id="SAEICGW"/>
<dbReference type="PhylomeDB" id="Q2V2W8"/>
<dbReference type="PRO" id="PR:Q2V2W8"/>
<dbReference type="Proteomes" id="UP000006548">
    <property type="component" value="Chromosome 5"/>
</dbReference>
<dbReference type="ExpressionAtlas" id="Q2V2W8">
    <property type="expression patterns" value="baseline"/>
</dbReference>
<dbReference type="GO" id="GO:0005576">
    <property type="term" value="C:extracellular region"/>
    <property type="evidence" value="ECO:0007669"/>
    <property type="project" value="UniProtKB-SubCell"/>
</dbReference>
<dbReference type="GO" id="GO:0050832">
    <property type="term" value="P:defense response to fungus"/>
    <property type="evidence" value="ECO:0007669"/>
    <property type="project" value="UniProtKB-KW"/>
</dbReference>
<dbReference type="GO" id="GO:0031640">
    <property type="term" value="P:killing of cells of another organism"/>
    <property type="evidence" value="ECO:0007669"/>
    <property type="project" value="UniProtKB-KW"/>
</dbReference>
<dbReference type="InterPro" id="IPR010851">
    <property type="entry name" value="DEFL"/>
</dbReference>
<dbReference type="Pfam" id="PF25052">
    <property type="entry name" value="AtDEF-like"/>
    <property type="match status" value="1"/>
</dbReference>